<protein>
    <recommendedName>
        <fullName>Cyclin-F</fullName>
    </recommendedName>
</protein>
<comment type="function">
    <text evidence="1">Substrate recognition component of a SCF (SKP1-CUL1-F-box protein) E3 ubiquitin-protein ligase complex which mediates the ubiquitination and subsequent proteasomal degradation of target proteins (By similarity). The SCF(CCNF) E3 ubiquitin-protein ligase complex is an integral component of the ubiquitin proteasome system (UPS) and links proteasome degradation to the cell cycle (By similarity). Mediates the substrate recognition and the proteasomal degradation of various target proteins involved in the regulation of cell cycle progression and in the maintenance of genome stability (By similarity). Mediates the ubiquitination and subsequent proteasomal degradation of CP110 during G2 phase, thereby acting as an inhibitor of centrosome reduplication (By similarity). In G2, mediates the ubiquitination and proteasomal degradation of CDC6, thereby suppressing DNA re-replication and preventing genome instability (By similarity). Involved in the ubiquitination and degradation of the substrate adapter CDH1 of the anaphase-promoting complex (APC/C), thereby acting as an antagonist of APC/C in regulating G1 progression and S phase entry (By similarity). May play a role in the G2 cell cycle checkpoint control after DNA damage, possibly by promoting the ubiquitination of MYBL2/BMYB (By similarity).</text>
</comment>
<comment type="subunit">
    <text evidence="1">Component of the SCF(CCNF) complex consisting of CUL1, RBX1, SKP1 and CCNF (By similarity). Interacts with SKP1 (By similarity). Interacts with CUL1 (By similarity). Interacts with CCNB1; interaction is required for nuclear localization of CCNB1 (By similarity). Interacts with CCP110; this interaction leads to CCP110 ubiquitination and degradation via the proteasome pathway (By similarity). Interacts (via the Cyclin N-terminal domain) with MYBL2/BMYB (By similarity). Interacts with FZR1/CDH1 (via N-terminus) (By similarity). Interacts with RRM2 (via Cy motif and when phosphorylated at 'Thr-33'); the interaction occurs exclusively in G2 and early M (By similarity). Interacts with CDC6 (via Cy motif); the interaction takes place during G2 and M phase (By similarity).</text>
</comment>
<comment type="subcellular location">
    <subcellularLocation>
        <location evidence="1">Nucleus</location>
    </subcellularLocation>
    <subcellularLocation>
        <location evidence="1">Cytoplasm</location>
        <location evidence="1">Perinuclear region</location>
    </subcellularLocation>
    <subcellularLocation>
        <location evidence="1">Cytoplasm</location>
        <location evidence="1">Cytoskeleton</location>
        <location evidence="1">Microtubule organizing center</location>
        <location evidence="1">Centrosome</location>
        <location evidence="1">Centriole</location>
    </subcellularLocation>
    <text evidence="1">Localization in the centrosome is rare in S phase cells and increases in G2 cells, Localizes on both the mother and daughter centrioles. Localization to centrosomes is not dependent on CP110. Localizes to the nucleus in G2 phase.</text>
</comment>
<comment type="domain">
    <text evidence="1">The nuclear localization signals mediate the localization to the nucleus and are required for CCNB1 localization to the nucleus.</text>
</comment>
<comment type="domain">
    <text evidence="1">The D box motifs 1-5 (amino acid sequence RxxL) are involved in substrate binding, such as FZR1/CDH1, and may be ubiquitinated.</text>
</comment>
<comment type="PTM">
    <text evidence="1">Degraded when the spindle assembly checkpoint is activated during the G2-M transition. Degradation is not dependent on the proteasome or ubiquitin and depends on the C-terminal PEST sequence.</text>
</comment>
<comment type="PTM">
    <text evidence="1">Phosphorylated just before cells enter into mitosis.</text>
</comment>
<comment type="PTM">
    <text evidence="1">Ubiquitinated by the anaphase-promoting complex (APC/C); leading to its degradation by the proteasome.</text>
</comment>
<comment type="similarity">
    <text evidence="5">Belongs to the cyclin family. Cyclin AB subfamily.</text>
</comment>
<reference key="1">
    <citation type="submission" date="2007-06" db="EMBL/GenBank/DDBJ databases">
        <authorList>
            <consortium name="NIH - Mammalian Gene Collection (MGC) project"/>
        </authorList>
    </citation>
    <scope>NUCLEOTIDE SEQUENCE [LARGE SCALE MRNA]</scope>
    <source>
        <strain>Hereford</strain>
        <tissue>Thymus</tissue>
    </source>
</reference>
<proteinExistence type="evidence at transcript level"/>
<dbReference type="EMBL" id="BC142318">
    <property type="protein sequence ID" value="AAI42319.1"/>
    <property type="molecule type" value="mRNA"/>
</dbReference>
<dbReference type="RefSeq" id="NP_001092340.1">
    <property type="nucleotide sequence ID" value="NM_001098870.2"/>
</dbReference>
<dbReference type="SMR" id="A5PK16"/>
<dbReference type="FunCoup" id="A5PK16">
    <property type="interactions" value="658"/>
</dbReference>
<dbReference type="STRING" id="9913.ENSBTAP00000034530"/>
<dbReference type="PaxDb" id="9913-ENSBTAP00000034530"/>
<dbReference type="Ensembl" id="ENSBTAT00000034643.6">
    <property type="protein sequence ID" value="ENSBTAP00000034530.6"/>
    <property type="gene ID" value="ENSBTAG00000065153.1"/>
</dbReference>
<dbReference type="GeneID" id="505200"/>
<dbReference type="KEGG" id="bta:505200"/>
<dbReference type="CTD" id="899"/>
<dbReference type="eggNOG" id="KOG0654">
    <property type="taxonomic scope" value="Eukaryota"/>
</dbReference>
<dbReference type="GeneTree" id="ENSGT00810000125541"/>
<dbReference type="HOGENOM" id="CLU_020348_0_0_1"/>
<dbReference type="InParanoid" id="A5PK16"/>
<dbReference type="OrthoDB" id="5590282at2759"/>
<dbReference type="TreeFam" id="TF101006"/>
<dbReference type="Proteomes" id="UP000009136">
    <property type="component" value="Chromosome 25"/>
</dbReference>
<dbReference type="GO" id="GO:0005814">
    <property type="term" value="C:centriole"/>
    <property type="evidence" value="ECO:0000250"/>
    <property type="project" value="UniProtKB"/>
</dbReference>
<dbReference type="GO" id="GO:0000307">
    <property type="term" value="C:cyclin-dependent protein kinase holoenzyme complex"/>
    <property type="evidence" value="ECO:0000318"/>
    <property type="project" value="GO_Central"/>
</dbReference>
<dbReference type="GO" id="GO:0005737">
    <property type="term" value="C:cytoplasm"/>
    <property type="evidence" value="ECO:0000318"/>
    <property type="project" value="GO_Central"/>
</dbReference>
<dbReference type="GO" id="GO:0005815">
    <property type="term" value="C:microtubule organizing center"/>
    <property type="evidence" value="ECO:0000318"/>
    <property type="project" value="GO_Central"/>
</dbReference>
<dbReference type="GO" id="GO:0005634">
    <property type="term" value="C:nucleus"/>
    <property type="evidence" value="ECO:0000250"/>
    <property type="project" value="UniProtKB"/>
</dbReference>
<dbReference type="GO" id="GO:0048471">
    <property type="term" value="C:perinuclear region of cytoplasm"/>
    <property type="evidence" value="ECO:0007669"/>
    <property type="project" value="UniProtKB-SubCell"/>
</dbReference>
<dbReference type="GO" id="GO:0019005">
    <property type="term" value="C:SCF ubiquitin ligase complex"/>
    <property type="evidence" value="ECO:0000250"/>
    <property type="project" value="UniProtKB"/>
</dbReference>
<dbReference type="GO" id="GO:0016538">
    <property type="term" value="F:cyclin-dependent protein serine/threonine kinase regulator activity"/>
    <property type="evidence" value="ECO:0000318"/>
    <property type="project" value="GO_Central"/>
</dbReference>
<dbReference type="GO" id="GO:0051301">
    <property type="term" value="P:cell division"/>
    <property type="evidence" value="ECO:0007669"/>
    <property type="project" value="UniProtKB-KW"/>
</dbReference>
<dbReference type="GO" id="GO:0000082">
    <property type="term" value="P:G1/S transition of mitotic cell cycle"/>
    <property type="evidence" value="ECO:0000318"/>
    <property type="project" value="GO_Central"/>
</dbReference>
<dbReference type="GO" id="GO:0010826">
    <property type="term" value="P:negative regulation of centrosome duplication"/>
    <property type="evidence" value="ECO:0000250"/>
    <property type="project" value="UniProtKB"/>
</dbReference>
<dbReference type="GO" id="GO:0016567">
    <property type="term" value="P:protein ubiquitination"/>
    <property type="evidence" value="ECO:0000250"/>
    <property type="project" value="UniProtKB"/>
</dbReference>
<dbReference type="GO" id="GO:0051726">
    <property type="term" value="P:regulation of cell cycle"/>
    <property type="evidence" value="ECO:0000250"/>
    <property type="project" value="UniProtKB"/>
</dbReference>
<dbReference type="GO" id="GO:0031146">
    <property type="term" value="P:SCF-dependent proteasomal ubiquitin-dependent protein catabolic process"/>
    <property type="evidence" value="ECO:0000250"/>
    <property type="project" value="UniProtKB"/>
</dbReference>
<dbReference type="CDD" id="cd20521">
    <property type="entry name" value="CYCLIN_CCNF_rpt1"/>
    <property type="match status" value="1"/>
</dbReference>
<dbReference type="CDD" id="cd22082">
    <property type="entry name" value="F-box_FBXO1"/>
    <property type="match status" value="1"/>
</dbReference>
<dbReference type="FunFam" id="1.10.472.10:FF:000038">
    <property type="entry name" value="Cyclin F"/>
    <property type="match status" value="1"/>
</dbReference>
<dbReference type="FunFam" id="1.10.472.10:FF:000055">
    <property type="entry name" value="Cyclin F"/>
    <property type="match status" value="1"/>
</dbReference>
<dbReference type="Gene3D" id="1.10.472.10">
    <property type="entry name" value="Cyclin-like"/>
    <property type="match status" value="2"/>
</dbReference>
<dbReference type="Gene3D" id="1.25.40.10">
    <property type="entry name" value="Tetratricopeptide repeat domain"/>
    <property type="match status" value="1"/>
</dbReference>
<dbReference type="InterPro" id="IPR039361">
    <property type="entry name" value="Cyclin"/>
</dbReference>
<dbReference type="InterPro" id="IPR013763">
    <property type="entry name" value="Cyclin-like_dom"/>
</dbReference>
<dbReference type="InterPro" id="IPR036915">
    <property type="entry name" value="Cyclin-like_sf"/>
</dbReference>
<dbReference type="InterPro" id="IPR004367">
    <property type="entry name" value="Cyclin_C-dom"/>
</dbReference>
<dbReference type="InterPro" id="IPR006671">
    <property type="entry name" value="Cyclin_N"/>
</dbReference>
<dbReference type="InterPro" id="IPR048258">
    <property type="entry name" value="Cyclins_cyclin-box"/>
</dbReference>
<dbReference type="InterPro" id="IPR036047">
    <property type="entry name" value="F-box-like_dom_sf"/>
</dbReference>
<dbReference type="InterPro" id="IPR001810">
    <property type="entry name" value="F-box_dom"/>
</dbReference>
<dbReference type="InterPro" id="IPR011990">
    <property type="entry name" value="TPR-like_helical_dom_sf"/>
</dbReference>
<dbReference type="PANTHER" id="PTHR10177">
    <property type="entry name" value="CYCLINS"/>
    <property type="match status" value="1"/>
</dbReference>
<dbReference type="Pfam" id="PF02984">
    <property type="entry name" value="Cyclin_C"/>
    <property type="match status" value="1"/>
</dbReference>
<dbReference type="Pfam" id="PF00134">
    <property type="entry name" value="Cyclin_N"/>
    <property type="match status" value="1"/>
</dbReference>
<dbReference type="Pfam" id="PF00646">
    <property type="entry name" value="F-box"/>
    <property type="match status" value="1"/>
</dbReference>
<dbReference type="SMART" id="SM00385">
    <property type="entry name" value="CYCLIN"/>
    <property type="match status" value="2"/>
</dbReference>
<dbReference type="SMART" id="SM01332">
    <property type="entry name" value="Cyclin_C"/>
    <property type="match status" value="1"/>
</dbReference>
<dbReference type="SMART" id="SM00256">
    <property type="entry name" value="FBOX"/>
    <property type="match status" value="1"/>
</dbReference>
<dbReference type="SUPFAM" id="SSF47954">
    <property type="entry name" value="Cyclin-like"/>
    <property type="match status" value="2"/>
</dbReference>
<dbReference type="SUPFAM" id="SSF81383">
    <property type="entry name" value="F-box domain"/>
    <property type="match status" value="1"/>
</dbReference>
<dbReference type="PROSITE" id="PS00292">
    <property type="entry name" value="CYCLINS"/>
    <property type="match status" value="1"/>
</dbReference>
<dbReference type="PROSITE" id="PS50181">
    <property type="entry name" value="FBOX"/>
    <property type="match status" value="1"/>
</dbReference>
<sequence>MGSGGVIHCRCAKCFCYPSKRRIRRRPRNLTILNLPEDALFHILKWLSVGDILAVRAVHSHLKYLVDNHASVWACASFQELWPSPGNLKLFERAAEKGNFEAAVKLGIAYLYNEGLSVSDEARAEVNGLRASRYFSLAERLNVGAAPFIWLFIRPPWSVSGSCCKAVVHESLRAECQLQKTHRASILHCLGRVLSLFEDEEKQKQARKLFEESANQGCLTSSYLLWESDRRMDMLDPGRCLHSFRKLRDFAAKGCWEAQLSLAKACAHGHQLGLEAKASSEIVCQLFQASHAVNKQRVFSVQKGLNDTMRYILIDWLVEVATMKDFSSLCLHLTVECVDRYLRRRLVPRYRLQLLGIACMVICTRFISKEILTIREAVWLTDNTYKYEDLVRMMGEVVSALDGKIRVPTVVDYKDVLLTLVPMAPRTQHLCSFLCELSLLHTSLAAYAPAHLAAAALLLARLTHGQTQPWTTQLWDLTGFSCEDLIPCVLSLHQKCFHDDAPKDYRQVSLTAVKQRFEDKRYEEISLEEVLSYGQLCAALGVKQESLEPAPFLSAGDIHAFLSSPSARRTKRKRENSLQEDRGSFVTTPTAELSSQEETLLGSFLDWSLDYCSGYEGDQESEGEKEGDVTAPSGVLDVTVVYLSPEEHCCQESSDEEACPEEACGAQDTQALVPGHQALRTPGPEPPLCSRWGLGKDVTTSGYSSVNSASPTDSGRTSGGPPRSTSELPTGSSLNTQPCHHHARKSCLQCRPPSPPESCAPQQQVKRKNLSAHSEEEEEDMNLGFLKL</sequence>
<organism>
    <name type="scientific">Bos taurus</name>
    <name type="common">Bovine</name>
    <dbReference type="NCBI Taxonomy" id="9913"/>
    <lineage>
        <taxon>Eukaryota</taxon>
        <taxon>Metazoa</taxon>
        <taxon>Chordata</taxon>
        <taxon>Craniata</taxon>
        <taxon>Vertebrata</taxon>
        <taxon>Euteleostomi</taxon>
        <taxon>Mammalia</taxon>
        <taxon>Eutheria</taxon>
        <taxon>Laurasiatheria</taxon>
        <taxon>Artiodactyla</taxon>
        <taxon>Ruminantia</taxon>
        <taxon>Pecora</taxon>
        <taxon>Bovidae</taxon>
        <taxon>Bovinae</taxon>
        <taxon>Bos</taxon>
    </lineage>
</organism>
<name>CCNF_BOVIN</name>
<keyword id="KW-0131">Cell cycle</keyword>
<keyword id="KW-0132">Cell division</keyword>
<keyword id="KW-0195">Cyclin</keyword>
<keyword id="KW-0963">Cytoplasm</keyword>
<keyword id="KW-0206">Cytoskeleton</keyword>
<keyword id="KW-0498">Mitosis</keyword>
<keyword id="KW-0539">Nucleus</keyword>
<keyword id="KW-0597">Phosphoprotein</keyword>
<keyword id="KW-1185">Reference proteome</keyword>
<keyword id="KW-0832">Ubl conjugation</keyword>
<keyword id="KW-0833">Ubl conjugation pathway</keyword>
<evidence type="ECO:0000250" key="1">
    <source>
        <dbReference type="UniProtKB" id="P41002"/>
    </source>
</evidence>
<evidence type="ECO:0000255" key="2"/>
<evidence type="ECO:0000255" key="3">
    <source>
        <dbReference type="PROSITE-ProRule" id="PRU00080"/>
    </source>
</evidence>
<evidence type="ECO:0000256" key="4">
    <source>
        <dbReference type="SAM" id="MobiDB-lite"/>
    </source>
</evidence>
<evidence type="ECO:0000305" key="5"/>
<gene>
    <name type="primary">CCNF</name>
</gene>
<accession>A5PK16</accession>
<feature type="chain" id="PRO_0000398634" description="Cyclin-F">
    <location>
        <begin position="1"/>
        <end position="788"/>
    </location>
</feature>
<feature type="domain" description="F-box" evidence="3">
    <location>
        <begin position="29"/>
        <end position="76"/>
    </location>
</feature>
<feature type="domain" description="Cyclin N-terminal" evidence="2">
    <location>
        <begin position="291"/>
        <end position="405"/>
    </location>
</feature>
<feature type="region of interest" description="Disordered" evidence="4">
    <location>
        <begin position="566"/>
        <end position="585"/>
    </location>
</feature>
<feature type="region of interest" description="PEST">
    <location>
        <begin position="582"/>
        <end position="766"/>
    </location>
</feature>
<feature type="region of interest" description="Disordered" evidence="4">
    <location>
        <begin position="700"/>
        <end position="788"/>
    </location>
</feature>
<feature type="short sequence motif" description="Nuclear localization signal 1" evidence="1">
    <location>
        <begin position="20"/>
        <end position="28"/>
    </location>
</feature>
<feature type="short sequence motif" description="D box 1" evidence="1">
    <location>
        <begin position="310"/>
        <end position="313"/>
    </location>
</feature>
<feature type="short sequence motif" description="D box 2" evidence="1">
    <location>
        <begin position="343"/>
        <end position="346"/>
    </location>
</feature>
<feature type="short sequence motif" description="D box 3" evidence="1">
    <location>
        <begin position="349"/>
        <end position="352"/>
    </location>
</feature>
<feature type="short sequence motif" description="D box 4" evidence="1">
    <location>
        <begin position="351"/>
        <end position="354"/>
    </location>
</feature>
<feature type="short sequence motif" description="Nuclear localization signal 2" evidence="1">
    <location>
        <begin position="568"/>
        <end position="574"/>
    </location>
</feature>
<feature type="short sequence motif" description="D box 5" evidence="1">
    <location>
        <begin position="767"/>
        <end position="770"/>
    </location>
</feature>
<feature type="compositionally biased region" description="Polar residues" evidence="4">
    <location>
        <begin position="700"/>
        <end position="716"/>
    </location>
</feature>
<feature type="compositionally biased region" description="Polar residues" evidence="4">
    <location>
        <begin position="723"/>
        <end position="738"/>
    </location>
</feature>